<evidence type="ECO:0000255" key="1">
    <source>
        <dbReference type="HAMAP-Rule" id="MF_00121"/>
    </source>
</evidence>
<keyword id="KW-0067">ATP-binding</keyword>
<keyword id="KW-0436">Ligase</keyword>
<keyword id="KW-0547">Nucleotide-binding</keyword>
<keyword id="KW-0648">Protein biosynthesis</keyword>
<keyword id="KW-1185">Reference proteome</keyword>
<protein>
    <recommendedName>
        <fullName evidence="1">Aspartyl/glutamyl-tRNA(Asn/Gln) amidotransferase subunit B</fullName>
        <shortName evidence="1">Asp/Glu-ADT subunit B</shortName>
        <ecNumber evidence="1">6.3.5.-</ecNumber>
    </recommendedName>
</protein>
<proteinExistence type="inferred from homology"/>
<comment type="function">
    <text evidence="1">Allows the formation of correctly charged Asn-tRNA(Asn) or Gln-tRNA(Gln) through the transamidation of misacylated Asp-tRNA(Asn) or Glu-tRNA(Gln) in organisms which lack either or both of asparaginyl-tRNA or glutaminyl-tRNA synthetases. The reaction takes place in the presence of glutamine and ATP through an activated phospho-Asp-tRNA(Asn) or phospho-Glu-tRNA(Gln).</text>
</comment>
<comment type="catalytic activity">
    <reaction evidence="1">
        <text>L-glutamyl-tRNA(Gln) + L-glutamine + ATP + H2O = L-glutaminyl-tRNA(Gln) + L-glutamate + ADP + phosphate + H(+)</text>
        <dbReference type="Rhea" id="RHEA:17521"/>
        <dbReference type="Rhea" id="RHEA-COMP:9681"/>
        <dbReference type="Rhea" id="RHEA-COMP:9684"/>
        <dbReference type="ChEBI" id="CHEBI:15377"/>
        <dbReference type="ChEBI" id="CHEBI:15378"/>
        <dbReference type="ChEBI" id="CHEBI:29985"/>
        <dbReference type="ChEBI" id="CHEBI:30616"/>
        <dbReference type="ChEBI" id="CHEBI:43474"/>
        <dbReference type="ChEBI" id="CHEBI:58359"/>
        <dbReference type="ChEBI" id="CHEBI:78520"/>
        <dbReference type="ChEBI" id="CHEBI:78521"/>
        <dbReference type="ChEBI" id="CHEBI:456216"/>
    </reaction>
</comment>
<comment type="catalytic activity">
    <reaction evidence="1">
        <text>L-aspartyl-tRNA(Asn) + L-glutamine + ATP + H2O = L-asparaginyl-tRNA(Asn) + L-glutamate + ADP + phosphate + 2 H(+)</text>
        <dbReference type="Rhea" id="RHEA:14513"/>
        <dbReference type="Rhea" id="RHEA-COMP:9674"/>
        <dbReference type="Rhea" id="RHEA-COMP:9677"/>
        <dbReference type="ChEBI" id="CHEBI:15377"/>
        <dbReference type="ChEBI" id="CHEBI:15378"/>
        <dbReference type="ChEBI" id="CHEBI:29985"/>
        <dbReference type="ChEBI" id="CHEBI:30616"/>
        <dbReference type="ChEBI" id="CHEBI:43474"/>
        <dbReference type="ChEBI" id="CHEBI:58359"/>
        <dbReference type="ChEBI" id="CHEBI:78515"/>
        <dbReference type="ChEBI" id="CHEBI:78516"/>
        <dbReference type="ChEBI" id="CHEBI:456216"/>
    </reaction>
</comment>
<comment type="subunit">
    <text evidence="1">Heterotrimer of A, B and C subunits.</text>
</comment>
<comment type="similarity">
    <text evidence="1">Belongs to the GatB/GatE family. GatB subfamily.</text>
</comment>
<sequence>MSLIDTRIPEPKRFISGATGDWEVVIGMEVHAQVTSESKLFSGASTSFGAEPNSNVSLVDAAMPGMLPVINLECVKQAVRTGIGLNAQINLKSVFDRKNYFYPDLPQGYQISQFKQPIVGEGKIMISVGPDNKGQFEDVEIGIERLHLEQDAGKSMHDQHPTMSYVDLNRSGVALMEIVSKPDLRSSDEARAYLTKLRTIVRYLGTCDGNMDEGSMRADVNVSVRRPGGEFGTRCEIKNVNSIRFVGQAIEYEARRQIAILEDGGSIDQETRLFDPVKGETRSMRSKEEAHDYRYFPDPDLLPLEFDQAFVDALAVDLPELPDVKKQRLVEKQGISIYDASILVTEKAIADYYESVAAGRDGKAAANWVINDLLGALNKAGKDIEESPVSPEQLGAVIDLIKEGTISGKIAKDLFEIVWNEGGDPKKLVEERGMKQVTDTGAIEKAVDDVIAANPEKVEQAKAKPTLAGWFVGQVMKATGGKANPQSVNELVKAKLGIEE</sequence>
<reference key="1">
    <citation type="journal article" date="2011" name="J. Bacteriol.">
        <title>Genome of Ochrobactrum anthropi ATCC 49188 T, a versatile opportunistic pathogen and symbiont of several eukaryotic hosts.</title>
        <authorList>
            <person name="Chain P.S."/>
            <person name="Lang D.M."/>
            <person name="Comerci D.J."/>
            <person name="Malfatti S.A."/>
            <person name="Vergez L.M."/>
            <person name="Shin M."/>
            <person name="Ugalde R.A."/>
            <person name="Garcia E."/>
            <person name="Tolmasky M.E."/>
        </authorList>
    </citation>
    <scope>NUCLEOTIDE SEQUENCE [LARGE SCALE GENOMIC DNA]</scope>
    <source>
        <strain>ATCC 49188 / DSM 6882 / CCUG 24695 / JCM 21032 / LMG 3331 / NBRC 15819 / NCTC 12168 / Alc 37</strain>
    </source>
</reference>
<dbReference type="EC" id="6.3.5.-" evidence="1"/>
<dbReference type="EMBL" id="CP000758">
    <property type="protein sequence ID" value="ABS14995.1"/>
    <property type="molecule type" value="Genomic_DNA"/>
</dbReference>
<dbReference type="RefSeq" id="WP_012092152.1">
    <property type="nucleotide sequence ID" value="NC_009667.1"/>
</dbReference>
<dbReference type="SMR" id="A6X191"/>
<dbReference type="STRING" id="439375.Oant_2279"/>
<dbReference type="KEGG" id="oan:Oant_2279"/>
<dbReference type="PATRIC" id="fig|439375.7.peg.2399"/>
<dbReference type="eggNOG" id="COG0064">
    <property type="taxonomic scope" value="Bacteria"/>
</dbReference>
<dbReference type="HOGENOM" id="CLU_019240_0_0_5"/>
<dbReference type="PhylomeDB" id="A6X191"/>
<dbReference type="Proteomes" id="UP000002301">
    <property type="component" value="Chromosome 1"/>
</dbReference>
<dbReference type="GO" id="GO:0050566">
    <property type="term" value="F:asparaginyl-tRNA synthase (glutamine-hydrolyzing) activity"/>
    <property type="evidence" value="ECO:0007669"/>
    <property type="project" value="RHEA"/>
</dbReference>
<dbReference type="GO" id="GO:0005524">
    <property type="term" value="F:ATP binding"/>
    <property type="evidence" value="ECO:0007669"/>
    <property type="project" value="UniProtKB-KW"/>
</dbReference>
<dbReference type="GO" id="GO:0050567">
    <property type="term" value="F:glutaminyl-tRNA synthase (glutamine-hydrolyzing) activity"/>
    <property type="evidence" value="ECO:0007669"/>
    <property type="project" value="UniProtKB-UniRule"/>
</dbReference>
<dbReference type="GO" id="GO:0070681">
    <property type="term" value="P:glutaminyl-tRNAGln biosynthesis via transamidation"/>
    <property type="evidence" value="ECO:0007669"/>
    <property type="project" value="TreeGrafter"/>
</dbReference>
<dbReference type="GO" id="GO:0006412">
    <property type="term" value="P:translation"/>
    <property type="evidence" value="ECO:0007669"/>
    <property type="project" value="UniProtKB-UniRule"/>
</dbReference>
<dbReference type="FunFam" id="1.10.10.410:FF:000001">
    <property type="entry name" value="Aspartyl/glutamyl-tRNA(Asn/Gln) amidotransferase subunit B"/>
    <property type="match status" value="1"/>
</dbReference>
<dbReference type="Gene3D" id="1.10.10.410">
    <property type="match status" value="1"/>
</dbReference>
<dbReference type="Gene3D" id="1.10.150.380">
    <property type="entry name" value="GatB domain, N-terminal subdomain"/>
    <property type="match status" value="1"/>
</dbReference>
<dbReference type="HAMAP" id="MF_00121">
    <property type="entry name" value="GatB"/>
    <property type="match status" value="1"/>
</dbReference>
<dbReference type="InterPro" id="IPR017959">
    <property type="entry name" value="Asn/Gln-tRNA_amidoTrfase_suB/E"/>
</dbReference>
<dbReference type="InterPro" id="IPR006075">
    <property type="entry name" value="Asn/Gln-tRNA_Trfase_suB/E_cat"/>
</dbReference>
<dbReference type="InterPro" id="IPR018027">
    <property type="entry name" value="Asn/Gln_amidotransferase"/>
</dbReference>
<dbReference type="InterPro" id="IPR003789">
    <property type="entry name" value="Asn/Gln_tRNA_amidoTrase-B-like"/>
</dbReference>
<dbReference type="InterPro" id="IPR004413">
    <property type="entry name" value="GatB"/>
</dbReference>
<dbReference type="InterPro" id="IPR042114">
    <property type="entry name" value="GatB_C_1"/>
</dbReference>
<dbReference type="InterPro" id="IPR023168">
    <property type="entry name" value="GatB_Yqey_C_2"/>
</dbReference>
<dbReference type="InterPro" id="IPR017958">
    <property type="entry name" value="Gln-tRNA_amidoTrfase_suB_CS"/>
</dbReference>
<dbReference type="InterPro" id="IPR014746">
    <property type="entry name" value="Gln_synth/guanido_kin_cat_dom"/>
</dbReference>
<dbReference type="NCBIfam" id="TIGR00133">
    <property type="entry name" value="gatB"/>
    <property type="match status" value="1"/>
</dbReference>
<dbReference type="NCBIfam" id="NF004012">
    <property type="entry name" value="PRK05477.1-2"/>
    <property type="match status" value="1"/>
</dbReference>
<dbReference type="NCBIfam" id="NF004014">
    <property type="entry name" value="PRK05477.1-4"/>
    <property type="match status" value="1"/>
</dbReference>
<dbReference type="NCBIfam" id="NF004015">
    <property type="entry name" value="PRK05477.1-5"/>
    <property type="match status" value="1"/>
</dbReference>
<dbReference type="PANTHER" id="PTHR11659">
    <property type="entry name" value="GLUTAMYL-TRNA GLN AMIDOTRANSFERASE SUBUNIT B MITOCHONDRIAL AND PROKARYOTIC PET112-RELATED"/>
    <property type="match status" value="1"/>
</dbReference>
<dbReference type="PANTHER" id="PTHR11659:SF0">
    <property type="entry name" value="GLUTAMYL-TRNA(GLN) AMIDOTRANSFERASE SUBUNIT B, MITOCHONDRIAL"/>
    <property type="match status" value="1"/>
</dbReference>
<dbReference type="Pfam" id="PF02934">
    <property type="entry name" value="GatB_N"/>
    <property type="match status" value="1"/>
</dbReference>
<dbReference type="Pfam" id="PF02637">
    <property type="entry name" value="GatB_Yqey"/>
    <property type="match status" value="1"/>
</dbReference>
<dbReference type="SMART" id="SM00845">
    <property type="entry name" value="GatB_Yqey"/>
    <property type="match status" value="1"/>
</dbReference>
<dbReference type="SUPFAM" id="SSF89095">
    <property type="entry name" value="GatB/YqeY motif"/>
    <property type="match status" value="1"/>
</dbReference>
<dbReference type="SUPFAM" id="SSF55931">
    <property type="entry name" value="Glutamine synthetase/guanido kinase"/>
    <property type="match status" value="1"/>
</dbReference>
<dbReference type="PROSITE" id="PS01234">
    <property type="entry name" value="GATB"/>
    <property type="match status" value="1"/>
</dbReference>
<gene>
    <name evidence="1" type="primary">gatB</name>
    <name type="ordered locus">Oant_2279</name>
</gene>
<name>GATB_BRUA4</name>
<feature type="chain" id="PRO_1000016011" description="Aspartyl/glutamyl-tRNA(Asn/Gln) amidotransferase subunit B">
    <location>
        <begin position="1"/>
        <end position="500"/>
    </location>
</feature>
<accession>A6X191</accession>
<organism>
    <name type="scientific">Brucella anthropi (strain ATCC 49188 / DSM 6882 / CCUG 24695 / JCM 21032 / LMG 3331 / NBRC 15819 / NCTC 12168 / Alc 37)</name>
    <name type="common">Ochrobactrum anthropi</name>
    <dbReference type="NCBI Taxonomy" id="439375"/>
    <lineage>
        <taxon>Bacteria</taxon>
        <taxon>Pseudomonadati</taxon>
        <taxon>Pseudomonadota</taxon>
        <taxon>Alphaproteobacteria</taxon>
        <taxon>Hyphomicrobiales</taxon>
        <taxon>Brucellaceae</taxon>
        <taxon>Brucella/Ochrobactrum group</taxon>
        <taxon>Brucella</taxon>
    </lineage>
</organism>